<keyword id="KW-1185">Reference proteome</keyword>
<keyword id="KW-0687">Ribonucleoprotein</keyword>
<keyword id="KW-0689">Ribosomal protein</keyword>
<keyword id="KW-0694">RNA-binding</keyword>
<keyword id="KW-0699">rRNA-binding</keyword>
<comment type="function">
    <text evidence="1">This is one of the proteins that bind and probably mediate the attachment of the 5S RNA into the large ribosomal subunit, where it forms part of the central protuberance.</text>
</comment>
<comment type="subunit">
    <text evidence="1">Part of the 50S ribosomal subunit; part of the 5S rRNA/L5/L18/L25 subcomplex. Contacts the 5S and 23S rRNAs.</text>
</comment>
<comment type="similarity">
    <text evidence="1">Belongs to the universal ribosomal protein uL18 family.</text>
</comment>
<gene>
    <name evidence="1" type="primary">rplR</name>
    <name evidence="1" type="synonym">rpl18</name>
    <name type="ordered locus">sync_0422</name>
</gene>
<accession>Q0ID20</accession>
<dbReference type="EMBL" id="CP000435">
    <property type="protein sequence ID" value="ABI47544.1"/>
    <property type="molecule type" value="Genomic_DNA"/>
</dbReference>
<dbReference type="RefSeq" id="WP_011618387.1">
    <property type="nucleotide sequence ID" value="NC_008319.1"/>
</dbReference>
<dbReference type="SMR" id="Q0ID20"/>
<dbReference type="STRING" id="64471.sync_0422"/>
<dbReference type="KEGG" id="syg:sync_0422"/>
<dbReference type="eggNOG" id="COG0256">
    <property type="taxonomic scope" value="Bacteria"/>
</dbReference>
<dbReference type="HOGENOM" id="CLU_098841_0_1_3"/>
<dbReference type="OrthoDB" id="9810939at2"/>
<dbReference type="Proteomes" id="UP000001961">
    <property type="component" value="Chromosome"/>
</dbReference>
<dbReference type="GO" id="GO:0022625">
    <property type="term" value="C:cytosolic large ribosomal subunit"/>
    <property type="evidence" value="ECO:0007669"/>
    <property type="project" value="TreeGrafter"/>
</dbReference>
<dbReference type="GO" id="GO:0008097">
    <property type="term" value="F:5S rRNA binding"/>
    <property type="evidence" value="ECO:0007669"/>
    <property type="project" value="TreeGrafter"/>
</dbReference>
<dbReference type="GO" id="GO:0003735">
    <property type="term" value="F:structural constituent of ribosome"/>
    <property type="evidence" value="ECO:0007669"/>
    <property type="project" value="InterPro"/>
</dbReference>
<dbReference type="GO" id="GO:0006412">
    <property type="term" value="P:translation"/>
    <property type="evidence" value="ECO:0007669"/>
    <property type="project" value="UniProtKB-UniRule"/>
</dbReference>
<dbReference type="CDD" id="cd00432">
    <property type="entry name" value="Ribosomal_L18_L5e"/>
    <property type="match status" value="1"/>
</dbReference>
<dbReference type="FunFam" id="3.30.420.100:FF:000001">
    <property type="entry name" value="50S ribosomal protein L18"/>
    <property type="match status" value="1"/>
</dbReference>
<dbReference type="Gene3D" id="3.30.420.100">
    <property type="match status" value="1"/>
</dbReference>
<dbReference type="HAMAP" id="MF_01337_B">
    <property type="entry name" value="Ribosomal_uL18_B"/>
    <property type="match status" value="1"/>
</dbReference>
<dbReference type="InterPro" id="IPR004389">
    <property type="entry name" value="Ribosomal_uL18_bac-type"/>
</dbReference>
<dbReference type="InterPro" id="IPR005484">
    <property type="entry name" value="Ribosomal_uL18_bac/euk"/>
</dbReference>
<dbReference type="NCBIfam" id="TIGR00060">
    <property type="entry name" value="L18_bact"/>
    <property type="match status" value="1"/>
</dbReference>
<dbReference type="PANTHER" id="PTHR12899">
    <property type="entry name" value="39S RIBOSOMAL PROTEIN L18, MITOCHONDRIAL"/>
    <property type="match status" value="1"/>
</dbReference>
<dbReference type="PANTHER" id="PTHR12899:SF3">
    <property type="entry name" value="LARGE RIBOSOMAL SUBUNIT PROTEIN UL18M"/>
    <property type="match status" value="1"/>
</dbReference>
<dbReference type="Pfam" id="PF00861">
    <property type="entry name" value="Ribosomal_L18p"/>
    <property type="match status" value="1"/>
</dbReference>
<dbReference type="SUPFAM" id="SSF53137">
    <property type="entry name" value="Translational machinery components"/>
    <property type="match status" value="1"/>
</dbReference>
<protein>
    <recommendedName>
        <fullName evidence="1">Large ribosomal subunit protein uL18</fullName>
    </recommendedName>
    <alternativeName>
        <fullName evidence="3">50S ribosomal protein L18</fullName>
    </alternativeName>
</protein>
<reference key="1">
    <citation type="journal article" date="2006" name="Proc. Natl. Acad. Sci. U.S.A.">
        <title>Genome sequence of Synechococcus CC9311: insights into adaptation to a coastal environment.</title>
        <authorList>
            <person name="Palenik B."/>
            <person name="Ren Q."/>
            <person name="Dupont C.L."/>
            <person name="Myers G.S."/>
            <person name="Heidelberg J.F."/>
            <person name="Badger J.H."/>
            <person name="Madupu R."/>
            <person name="Nelson W.C."/>
            <person name="Brinkac L.M."/>
            <person name="Dodson R.J."/>
            <person name="Durkin A.S."/>
            <person name="Daugherty S.C."/>
            <person name="Sullivan S.A."/>
            <person name="Khouri H."/>
            <person name="Mohamoud Y."/>
            <person name="Halpin R."/>
            <person name="Paulsen I.T."/>
        </authorList>
    </citation>
    <scope>NUCLEOTIDE SEQUENCE [LARGE SCALE GENOMIC DNA]</scope>
    <source>
        <strain>CC9311</strain>
    </source>
</reference>
<proteinExistence type="inferred from homology"/>
<name>RL18_SYNS3</name>
<sequence>MSTLSRKQQTQKRHRRLRRHLSGTANRPRLAVFRSNSHIYAQLIDDEAQSTLCSASTLDKDLRSSLKTNCSSCDASVAVGDLVAKRAIAKGIQQVVFDRGGNLYHGRVKALADAAREAGLQF</sequence>
<organism>
    <name type="scientific">Synechococcus sp. (strain CC9311)</name>
    <dbReference type="NCBI Taxonomy" id="64471"/>
    <lineage>
        <taxon>Bacteria</taxon>
        <taxon>Bacillati</taxon>
        <taxon>Cyanobacteriota</taxon>
        <taxon>Cyanophyceae</taxon>
        <taxon>Synechococcales</taxon>
        <taxon>Synechococcaceae</taxon>
        <taxon>Synechococcus</taxon>
    </lineage>
</organism>
<feature type="chain" id="PRO_1000053129" description="Large ribosomal subunit protein uL18">
    <location>
        <begin position="1"/>
        <end position="122"/>
    </location>
</feature>
<feature type="region of interest" description="Disordered" evidence="2">
    <location>
        <begin position="1"/>
        <end position="25"/>
    </location>
</feature>
<feature type="compositionally biased region" description="Basic residues" evidence="2">
    <location>
        <begin position="9"/>
        <end position="21"/>
    </location>
</feature>
<evidence type="ECO:0000255" key="1">
    <source>
        <dbReference type="HAMAP-Rule" id="MF_01337"/>
    </source>
</evidence>
<evidence type="ECO:0000256" key="2">
    <source>
        <dbReference type="SAM" id="MobiDB-lite"/>
    </source>
</evidence>
<evidence type="ECO:0000305" key="3"/>